<reference key="1">
    <citation type="journal article" date="2009" name="J. Bacteriol.">
        <title>Complete genome sequence and comparative genome analysis of enteropathogenic Escherichia coli O127:H6 strain E2348/69.</title>
        <authorList>
            <person name="Iguchi A."/>
            <person name="Thomson N.R."/>
            <person name="Ogura Y."/>
            <person name="Saunders D."/>
            <person name="Ooka T."/>
            <person name="Henderson I.R."/>
            <person name="Harris D."/>
            <person name="Asadulghani M."/>
            <person name="Kurokawa K."/>
            <person name="Dean P."/>
            <person name="Kenny B."/>
            <person name="Quail M.A."/>
            <person name="Thurston S."/>
            <person name="Dougan G."/>
            <person name="Hayashi T."/>
            <person name="Parkhill J."/>
            <person name="Frankel G."/>
        </authorList>
    </citation>
    <scope>NUCLEOTIDE SEQUENCE [LARGE SCALE GENOMIC DNA]</scope>
    <source>
        <strain>E2348/69 / EPEC</strain>
    </source>
</reference>
<proteinExistence type="inferred from homology"/>
<gene>
    <name evidence="1" type="primary">crl</name>
    <name type="ordered locus">E2348C_0233</name>
</gene>
<sequence length="133" mass="15599">MTLPSGHPKSRLIKKFTALGPYIREGKCEDNRFFFDCLAVCVNVKPAPEVREFWGWWMELEAQESRFTYSYQFGLFDKAGDWTSVPVKDTEVVERLEHTLREFHEKLRELLATLNLKLEPADDFRDEPVKLTA</sequence>
<dbReference type="EMBL" id="FM180568">
    <property type="protein sequence ID" value="CAS07781.1"/>
    <property type="molecule type" value="Genomic_DNA"/>
</dbReference>
<dbReference type="RefSeq" id="WP_000174682.1">
    <property type="nucleotide sequence ID" value="NC_011601.1"/>
</dbReference>
<dbReference type="SMR" id="B7UJC8"/>
<dbReference type="KEGG" id="ecg:E2348C_0233"/>
<dbReference type="HOGENOM" id="CLU_136773_0_0_6"/>
<dbReference type="Proteomes" id="UP000008205">
    <property type="component" value="Chromosome"/>
</dbReference>
<dbReference type="GO" id="GO:0005737">
    <property type="term" value="C:cytoplasm"/>
    <property type="evidence" value="ECO:0007669"/>
    <property type="project" value="UniProtKB-SubCell"/>
</dbReference>
<dbReference type="GO" id="GO:0045893">
    <property type="term" value="P:positive regulation of DNA-templated transcription"/>
    <property type="evidence" value="ECO:0007669"/>
    <property type="project" value="UniProtKB-UniRule"/>
</dbReference>
<dbReference type="FunFam" id="3.30.310.230:FF:000001">
    <property type="entry name" value="Sigma factor-binding protein Crl"/>
    <property type="match status" value="1"/>
</dbReference>
<dbReference type="Gene3D" id="3.30.310.230">
    <property type="entry name" value="Sigma factor-binding protein Crl monomer"/>
    <property type="match status" value="1"/>
</dbReference>
<dbReference type="HAMAP" id="MF_01178">
    <property type="entry name" value="Crl"/>
    <property type="match status" value="1"/>
</dbReference>
<dbReference type="InterPro" id="IPR009986">
    <property type="entry name" value="Tscrpt_reg_Crl"/>
</dbReference>
<dbReference type="InterPro" id="IPR038208">
    <property type="entry name" value="Tscrpt_reg_Crl_sf"/>
</dbReference>
<dbReference type="NCBIfam" id="NF008217">
    <property type="entry name" value="PRK10984.1"/>
    <property type="match status" value="1"/>
</dbReference>
<dbReference type="Pfam" id="PF07417">
    <property type="entry name" value="Crl"/>
    <property type="match status" value="1"/>
</dbReference>
<name>CRL_ECO27</name>
<evidence type="ECO:0000255" key="1">
    <source>
        <dbReference type="HAMAP-Rule" id="MF_01178"/>
    </source>
</evidence>
<organism>
    <name type="scientific">Escherichia coli O127:H6 (strain E2348/69 / EPEC)</name>
    <dbReference type="NCBI Taxonomy" id="574521"/>
    <lineage>
        <taxon>Bacteria</taxon>
        <taxon>Pseudomonadati</taxon>
        <taxon>Pseudomonadota</taxon>
        <taxon>Gammaproteobacteria</taxon>
        <taxon>Enterobacterales</taxon>
        <taxon>Enterobacteriaceae</taxon>
        <taxon>Escherichia</taxon>
    </lineage>
</organism>
<comment type="function">
    <text evidence="1">Binds to the sigma-S subunit of RNA polymerase, activating expression of sigma-S-regulated genes. Stimulates RNA polymerase holoenzyme formation and may bind to several other sigma factors, such as sigma-70 and sigma-32.</text>
</comment>
<comment type="subcellular location">
    <subcellularLocation>
        <location evidence="1">Cytoplasm</location>
    </subcellularLocation>
</comment>
<comment type="similarity">
    <text evidence="1">Belongs to the Crl family.</text>
</comment>
<accession>B7UJC8</accession>
<keyword id="KW-0010">Activator</keyword>
<keyword id="KW-0175">Coiled coil</keyword>
<keyword id="KW-0963">Cytoplasm</keyword>
<keyword id="KW-1185">Reference proteome</keyword>
<keyword id="KW-0804">Transcription</keyword>
<keyword id="KW-0805">Transcription regulation</keyword>
<feature type="chain" id="PRO_1000164423" description="Sigma factor-binding protein Crl">
    <location>
        <begin position="1"/>
        <end position="133"/>
    </location>
</feature>
<feature type="region of interest" description="Essential for activity" evidence="1">
    <location>
        <begin position="99"/>
        <end position="122"/>
    </location>
</feature>
<feature type="coiled-coil region" evidence="1">
    <location>
        <begin position="90"/>
        <end position="116"/>
    </location>
</feature>
<protein>
    <recommendedName>
        <fullName evidence="1">Sigma factor-binding protein Crl</fullName>
    </recommendedName>
</protein>